<gene>
    <name type="primary">OCLN</name>
</gene>
<protein>
    <recommendedName>
        <fullName>Occludin</fullName>
    </recommendedName>
</protein>
<feature type="chain" id="PRO_0000146738" description="Occludin">
    <location>
        <begin position="1"/>
        <end position="521"/>
    </location>
</feature>
<feature type="topological domain" description="Cytoplasmic" evidence="4">
    <location>
        <begin position="1"/>
        <end position="66"/>
    </location>
</feature>
<feature type="transmembrane region" description="Helical" evidence="4">
    <location>
        <begin position="67"/>
        <end position="89"/>
    </location>
</feature>
<feature type="topological domain" description="Extracellular" evidence="4">
    <location>
        <begin position="90"/>
        <end position="134"/>
    </location>
</feature>
<feature type="transmembrane region" description="Helical" evidence="4">
    <location>
        <begin position="135"/>
        <end position="159"/>
    </location>
</feature>
<feature type="topological domain" description="Cytoplasmic" evidence="4">
    <location>
        <begin position="160"/>
        <end position="169"/>
    </location>
</feature>
<feature type="transmembrane region" description="Helical" evidence="4">
    <location>
        <begin position="170"/>
        <end position="194"/>
    </location>
</feature>
<feature type="topological domain" description="Extracellular" evidence="4">
    <location>
        <begin position="195"/>
        <end position="242"/>
    </location>
</feature>
<feature type="transmembrane region" description="Helical" evidence="4">
    <location>
        <begin position="243"/>
        <end position="264"/>
    </location>
</feature>
<feature type="topological domain" description="Cytoplasmic" evidence="4">
    <location>
        <begin position="265"/>
        <end position="521"/>
    </location>
</feature>
<feature type="domain" description="MARVEL" evidence="6">
    <location>
        <begin position="60"/>
        <end position="268"/>
    </location>
</feature>
<feature type="domain" description="OCEL" evidence="7">
    <location>
        <begin position="413"/>
        <end position="521"/>
    </location>
</feature>
<feature type="region of interest" description="Disordered" evidence="8">
    <location>
        <begin position="301"/>
        <end position="407"/>
    </location>
</feature>
<feature type="coiled-coil region" evidence="4">
    <location>
        <begin position="424"/>
        <end position="488"/>
    </location>
</feature>
<feature type="compositionally biased region" description="Basic residues" evidence="8">
    <location>
        <begin position="380"/>
        <end position="389"/>
    </location>
</feature>
<feature type="compositionally biased region" description="Basic and acidic residues" evidence="8">
    <location>
        <begin position="390"/>
        <end position="399"/>
    </location>
</feature>
<feature type="modified residue" description="Phosphoserine" evidence="3">
    <location>
        <position position="301"/>
    </location>
</feature>
<feature type="modified residue" description="Phosphothreonine" evidence="3">
    <location>
        <position position="304"/>
    </location>
</feature>
<feature type="modified residue" description="Phosphoserine" evidence="2">
    <location>
        <position position="312"/>
    </location>
</feature>
<feature type="modified residue" description="Phosphoserine" evidence="2">
    <location>
        <position position="320"/>
    </location>
</feature>
<feature type="modified residue" description="Phosphoserine" evidence="3">
    <location>
        <position position="339"/>
    </location>
</feature>
<feature type="modified residue" description="Phosphotyrosine" evidence="2">
    <location>
        <position position="367"/>
    </location>
</feature>
<feature type="modified residue" description="Phosphoserine" evidence="2">
    <location>
        <position position="368"/>
    </location>
</feature>
<feature type="modified residue" description="Phosphoserine" evidence="2">
    <location>
        <position position="369"/>
    </location>
</feature>
<feature type="modified residue" description="Phosphotyrosine" evidence="2">
    <location>
        <position position="397"/>
    </location>
</feature>
<feature type="modified residue" description="Phosphotyrosine" evidence="2">
    <location>
        <position position="401"/>
    </location>
</feature>
<feature type="modified residue" description="Phosphothreonine; by PKC/PRKCH" evidence="2">
    <location>
        <position position="402"/>
    </location>
</feature>
<feature type="modified residue" description="Phosphothreonine; by PKC/PRKCH" evidence="2">
    <location>
        <position position="403"/>
    </location>
</feature>
<feature type="modified residue" description="Phosphoserine" evidence="2">
    <location>
        <position position="407"/>
    </location>
</feature>
<feature type="modified residue" description="Phosphoserine" evidence="2">
    <location>
        <position position="489"/>
    </location>
</feature>
<feature type="disulfide bond" evidence="5">
    <location>
        <begin position="215"/>
        <end position="236"/>
    </location>
</feature>
<comment type="function">
    <text>May play a role in the formation and regulation of the tight junction (TJ) paracellular permeability barrier. Interacts with ZO-1.</text>
</comment>
<comment type="subunit">
    <text evidence="2 3">Interacts with TJP1/ZO1. Interacts with VAPA. Interacts with CLDN1, CLDN6, CLDN9, CLDN11, CLDN12 and CLDN17. Interacts with PLSCR1. Interacts with LSR, ILDR1 and ILDR2. Interacts with TJP2/ZO2 (By similarity).</text>
</comment>
<comment type="interaction">
    <interactant intactId="EBI-16222162">
        <id>Q28269</id>
    </interactant>
    <interactant intactId="EBI-2865850">
        <id>P24723</id>
        <label>PRKCH</label>
    </interactant>
    <organismsDiffer>true</organismsDiffer>
    <experiments>2</experiments>
</comment>
<comment type="subcellular location">
    <subcellularLocation>
        <location evidence="2">Cell membrane</location>
        <topology evidence="4">Multi-pass membrane protein</topology>
    </subcellularLocation>
    <subcellularLocation>
        <location evidence="2">Cell junction</location>
        <location evidence="2">Tight junction</location>
    </subcellularLocation>
</comment>
<comment type="tissue specificity">
    <text>Localized at tight junctions of both epithelial and endothelial cells.</text>
</comment>
<comment type="domain">
    <text evidence="1">The C-terminal is cytoplasmic and is important for interaction with ZO-1. Necessary for the tight junction localization. Involved in the regulation of the permeability barrier function of the tight junction (By similarity).</text>
</comment>
<comment type="PTM">
    <text evidence="1 9">Dephosphorylated by PTPRJ (By similarity). Less-phosphorylated forms are found in basolateral membrane, cytosol and tight junction. More-heavily phosphorylated forms are concentrated exclusively in tight junction.</text>
</comment>
<comment type="similarity">
    <text evidence="10">Belongs to the ELL/occludin family.</text>
</comment>
<reference key="1">
    <citation type="journal article" date="1996" name="J. Cell Biol.">
        <title>Interspecies diversity of the occludin sequence: cDNA cloning of human, mouse, dog, and rat-kangaroo homologues.</title>
        <authorList>
            <person name="Ando-Akatsuka Y."/>
            <person name="Saitou M."/>
            <person name="Hirase T."/>
            <person name="Kishi M."/>
            <person name="Sakakibara A."/>
            <person name="Itoh M."/>
            <person name="Yonemura S."/>
            <person name="Furuse M."/>
            <person name="Tsukita S."/>
        </authorList>
    </citation>
    <scope>NUCLEOTIDE SEQUENCE [MRNA]</scope>
    <source>
        <strain>Cocker spaniel</strain>
        <tissue>Kidney</tissue>
    </source>
</reference>
<reference key="2">
    <citation type="journal article" date="1997" name="J. Cell Biol.">
        <title>Possible involvement of phosphorylation of occludin in tight junction formation.</title>
        <authorList>
            <person name="Sakakibara A."/>
            <person name="Furuse M."/>
            <person name="Saitou M."/>
            <person name="Ando-Akatsuka Y."/>
            <person name="Tsukita S."/>
        </authorList>
    </citation>
    <scope>PHOSPHORYLATION</scope>
</reference>
<keyword id="KW-0965">Cell junction</keyword>
<keyword id="KW-1003">Cell membrane</keyword>
<keyword id="KW-0175">Coiled coil</keyword>
<keyword id="KW-1015">Disulfide bond</keyword>
<keyword id="KW-0472">Membrane</keyword>
<keyword id="KW-0597">Phosphoprotein</keyword>
<keyword id="KW-1185">Reference proteome</keyword>
<keyword id="KW-0796">Tight junction</keyword>
<keyword id="KW-0812">Transmembrane</keyword>
<keyword id="KW-1133">Transmembrane helix</keyword>
<evidence type="ECO:0000250" key="1"/>
<evidence type="ECO:0000250" key="2">
    <source>
        <dbReference type="UniProtKB" id="Q16625"/>
    </source>
</evidence>
<evidence type="ECO:0000250" key="3">
    <source>
        <dbReference type="UniProtKB" id="Q61146"/>
    </source>
</evidence>
<evidence type="ECO:0000255" key="4"/>
<evidence type="ECO:0000255" key="5">
    <source>
        <dbReference type="PROSITE-ProRule" id="PRU00114"/>
    </source>
</evidence>
<evidence type="ECO:0000255" key="6">
    <source>
        <dbReference type="PROSITE-ProRule" id="PRU00581"/>
    </source>
</evidence>
<evidence type="ECO:0000255" key="7">
    <source>
        <dbReference type="PROSITE-ProRule" id="PRU01324"/>
    </source>
</evidence>
<evidence type="ECO:0000256" key="8">
    <source>
        <dbReference type="SAM" id="MobiDB-lite"/>
    </source>
</evidence>
<evidence type="ECO:0000269" key="9">
    <source>
    </source>
</evidence>
<evidence type="ECO:0000305" key="10"/>
<accession>Q28269</accession>
<sequence length="521" mass="59275">MSSRPFESPPPYRPDEFKPNHYAPSNDVYGGDMHVRPMLSQPAYSFYPEDEILHFYKWTSPPGVIRILSMLVIVMCIAIFGCVASTLAWDRGYGTGLMGGSIGYPYGSGFGSYGTGYGYGFGYGYGYGGYTDPRAAKGFLLAMVAFCFIAALVIFVTSVIRSDISRTRRYYLTVIILSAFLGVMMFIATIVYIMGVNPTAQASGSLYSSQIYAMCNQFYASTATGLYMDQYLYHYCVVDPQEAIAIVLGFMVIVAFALIIFFAVKTRRKMDRYDKSNILWDKEHIYDEQPPNVEEWVKNVSAGTQDMPPPPSDYVERVDSPMAYSSNGKVNDKRLYPESSYKSTPVPEVVQELPATSPADDFRQPRYSSSGHLEPPSKRAPSKGRTGRPKRLEQDHYETDYTTGGESCDELEEDWIREYPPITSDQQRQLYKRNFDTGLQEYKSLQAELDEINKELSRLDKELDDYREESEEYMAAADEYNRLKQVKGSPDYKNKRNYCKQLKSKLSHIKKMVGDYDRQKT</sequence>
<proteinExistence type="evidence at protein level"/>
<name>OCLN_CANLF</name>
<dbReference type="EMBL" id="U49221">
    <property type="protein sequence ID" value="AAC48582.1"/>
    <property type="molecule type" value="mRNA"/>
</dbReference>
<dbReference type="RefSeq" id="NP_001003195.1">
    <property type="nucleotide sequence ID" value="NM_001003195.1"/>
</dbReference>
<dbReference type="SMR" id="Q28269"/>
<dbReference type="DIP" id="DIP-48669N"/>
<dbReference type="FunCoup" id="Q28269">
    <property type="interactions" value="168"/>
</dbReference>
<dbReference type="IntAct" id="Q28269">
    <property type="interactions" value="1"/>
</dbReference>
<dbReference type="STRING" id="9615.ENSCAFP00000011546"/>
<dbReference type="PaxDb" id="9612-ENSCAFP00000011546"/>
<dbReference type="GeneID" id="403844"/>
<dbReference type="KEGG" id="cfa:403844"/>
<dbReference type="CTD" id="100506658"/>
<dbReference type="eggNOG" id="ENOG502QS9F">
    <property type="taxonomic scope" value="Eukaryota"/>
</dbReference>
<dbReference type="InParanoid" id="Q28269"/>
<dbReference type="OrthoDB" id="8867927at2759"/>
<dbReference type="Proteomes" id="UP000002254">
    <property type="component" value="Unplaced"/>
</dbReference>
<dbReference type="Proteomes" id="UP000694429">
    <property type="component" value="Unplaced"/>
</dbReference>
<dbReference type="Proteomes" id="UP000694542">
    <property type="component" value="Unplaced"/>
</dbReference>
<dbReference type="Proteomes" id="UP000805418">
    <property type="component" value="Unplaced"/>
</dbReference>
<dbReference type="GO" id="GO:0016324">
    <property type="term" value="C:apical plasma membrane"/>
    <property type="evidence" value="ECO:0000318"/>
    <property type="project" value="GO_Central"/>
</dbReference>
<dbReference type="GO" id="GO:0005923">
    <property type="term" value="C:bicellular tight junction"/>
    <property type="evidence" value="ECO:0000314"/>
    <property type="project" value="UniProtKB"/>
</dbReference>
<dbReference type="GO" id="GO:0031252">
    <property type="term" value="C:cell leading edge"/>
    <property type="evidence" value="ECO:0000314"/>
    <property type="project" value="ARUK-UCL"/>
</dbReference>
<dbReference type="GO" id="GO:0009986">
    <property type="term" value="C:cell surface"/>
    <property type="evidence" value="ECO:0000314"/>
    <property type="project" value="MGI"/>
</dbReference>
<dbReference type="GO" id="GO:0005911">
    <property type="term" value="C:cell-cell junction"/>
    <property type="evidence" value="ECO:0000314"/>
    <property type="project" value="ARUK-UCL"/>
</dbReference>
<dbReference type="GO" id="GO:0031410">
    <property type="term" value="C:cytoplasmic vesicle"/>
    <property type="evidence" value="ECO:0000318"/>
    <property type="project" value="GO_Central"/>
</dbReference>
<dbReference type="GO" id="GO:0070830">
    <property type="term" value="P:bicellular tight junction assembly"/>
    <property type="evidence" value="ECO:0000318"/>
    <property type="project" value="GO_Central"/>
</dbReference>
<dbReference type="GO" id="GO:0010631">
    <property type="term" value="P:epithelial cell migration"/>
    <property type="evidence" value="ECO:0000315"/>
    <property type="project" value="ARUK-UCL"/>
</dbReference>
<dbReference type="GO" id="GO:0010592">
    <property type="term" value="P:positive regulation of lamellipodium assembly"/>
    <property type="evidence" value="ECO:0000315"/>
    <property type="project" value="ARUK-UCL"/>
</dbReference>
<dbReference type="GO" id="GO:0031116">
    <property type="term" value="P:positive regulation of microtubule polymerization"/>
    <property type="evidence" value="ECO:0000315"/>
    <property type="project" value="ARUK-UCL"/>
</dbReference>
<dbReference type="GO" id="GO:0090303">
    <property type="term" value="P:positive regulation of wound healing"/>
    <property type="evidence" value="ECO:0000315"/>
    <property type="project" value="ARUK-UCL"/>
</dbReference>
<dbReference type="GO" id="GO:1902463">
    <property type="term" value="P:protein localization to cell leading edge"/>
    <property type="evidence" value="ECO:0000315"/>
    <property type="project" value="ARUK-UCL"/>
</dbReference>
<dbReference type="Gene3D" id="6.10.140.340">
    <property type="match status" value="1"/>
</dbReference>
<dbReference type="InterPro" id="IPR031176">
    <property type="entry name" value="ELL/occludin"/>
</dbReference>
<dbReference type="InterPro" id="IPR008253">
    <property type="entry name" value="Marvel"/>
</dbReference>
<dbReference type="InterPro" id="IPR002958">
    <property type="entry name" value="Occludin"/>
</dbReference>
<dbReference type="InterPro" id="IPR010844">
    <property type="entry name" value="Occludin_ELL"/>
</dbReference>
<dbReference type="PANTHER" id="PTHR23288:SF4">
    <property type="entry name" value="OCCLUDIN"/>
    <property type="match status" value="1"/>
</dbReference>
<dbReference type="PANTHER" id="PTHR23288">
    <property type="entry name" value="OCCLUDIN AND RNA POLYMERASE II ELONGATION FACTOR ELL"/>
    <property type="match status" value="1"/>
</dbReference>
<dbReference type="Pfam" id="PF01284">
    <property type="entry name" value="MARVEL"/>
    <property type="match status" value="1"/>
</dbReference>
<dbReference type="Pfam" id="PF07303">
    <property type="entry name" value="Occludin_ELL"/>
    <property type="match status" value="1"/>
</dbReference>
<dbReference type="PIRSF" id="PIRSF005993">
    <property type="entry name" value="Occludin"/>
    <property type="match status" value="1"/>
</dbReference>
<dbReference type="PRINTS" id="PR01258">
    <property type="entry name" value="OCCLUDIN"/>
</dbReference>
<dbReference type="SUPFAM" id="SSF144292">
    <property type="entry name" value="occludin/ELL-like"/>
    <property type="match status" value="1"/>
</dbReference>
<dbReference type="PROSITE" id="PS51225">
    <property type="entry name" value="MARVEL"/>
    <property type="match status" value="1"/>
</dbReference>
<dbReference type="PROSITE" id="PS51980">
    <property type="entry name" value="OCEL"/>
    <property type="match status" value="1"/>
</dbReference>
<organism>
    <name type="scientific">Canis lupus familiaris</name>
    <name type="common">Dog</name>
    <name type="synonym">Canis familiaris</name>
    <dbReference type="NCBI Taxonomy" id="9615"/>
    <lineage>
        <taxon>Eukaryota</taxon>
        <taxon>Metazoa</taxon>
        <taxon>Chordata</taxon>
        <taxon>Craniata</taxon>
        <taxon>Vertebrata</taxon>
        <taxon>Euteleostomi</taxon>
        <taxon>Mammalia</taxon>
        <taxon>Eutheria</taxon>
        <taxon>Laurasiatheria</taxon>
        <taxon>Carnivora</taxon>
        <taxon>Caniformia</taxon>
        <taxon>Canidae</taxon>
        <taxon>Canis</taxon>
    </lineage>
</organism>